<keyword id="KW-0963">Cytoplasm</keyword>
<keyword id="KW-0274">FAD</keyword>
<keyword id="KW-0285">Flavoprotein</keyword>
<keyword id="KW-0520">NAD</keyword>
<keyword id="KW-0819">tRNA processing</keyword>
<evidence type="ECO:0000255" key="1">
    <source>
        <dbReference type="HAMAP-Rule" id="MF_00129"/>
    </source>
</evidence>
<evidence type="ECO:0000305" key="2"/>
<accession>O32806</accession>
<accession>A2RMR7</accession>
<reference key="1">
    <citation type="journal article" date="2007" name="J. Bacteriol.">
        <title>The complete genome sequence of the lactic acid bacterial paradigm Lactococcus lactis subsp. cremoris MG1363.</title>
        <authorList>
            <person name="Wegmann U."/>
            <person name="O'Connell-Motherway M."/>
            <person name="Zomer A."/>
            <person name="Buist G."/>
            <person name="Shearman C."/>
            <person name="Canchaya C."/>
            <person name="Ventura M."/>
            <person name="Goesmann A."/>
            <person name="Gasson M.J."/>
            <person name="Kuipers O.P."/>
            <person name="van Sinderen D."/>
            <person name="Kok J."/>
        </authorList>
    </citation>
    <scope>NUCLEOTIDE SEQUENCE [LARGE SCALE GENOMIC DNA]</scope>
    <source>
        <strain>MG1363</strain>
    </source>
</reference>
<reference key="2">
    <citation type="journal article" date="1997" name="J. Bacteriol.">
        <title>Characterization of Lactococcus lactis UV-sensitive mutants obtained by ISS1 transposition.</title>
        <authorList>
            <person name="Duwat P."/>
            <person name="Cochu A."/>
            <person name="Ehrlich S.D."/>
            <person name="Gruss A."/>
        </authorList>
    </citation>
    <scope>NUCLEOTIDE SEQUENCE [GENOMIC DNA] OF 21-554</scope>
</reference>
<dbReference type="EMBL" id="AM406671">
    <property type="protein sequence ID" value="CAL98603.1"/>
    <property type="molecule type" value="Genomic_DNA"/>
</dbReference>
<dbReference type="EMBL" id="U80409">
    <property type="protein sequence ID" value="AAC45494.1"/>
    <property type="status" value="ALT_FRAME"/>
    <property type="molecule type" value="Genomic_DNA"/>
</dbReference>
<dbReference type="RefSeq" id="WP_011835755.1">
    <property type="nucleotide sequence ID" value="NC_009004.1"/>
</dbReference>
<dbReference type="SMR" id="O32806"/>
<dbReference type="STRING" id="416870.llmg_2035"/>
<dbReference type="KEGG" id="llm:llmg_2035"/>
<dbReference type="eggNOG" id="COG0445">
    <property type="taxonomic scope" value="Bacteria"/>
</dbReference>
<dbReference type="HOGENOM" id="CLU_007831_2_2_9"/>
<dbReference type="OrthoDB" id="9815560at2"/>
<dbReference type="PhylomeDB" id="O32806"/>
<dbReference type="Proteomes" id="UP000000364">
    <property type="component" value="Chromosome"/>
</dbReference>
<dbReference type="GO" id="GO:0005829">
    <property type="term" value="C:cytosol"/>
    <property type="evidence" value="ECO:0007669"/>
    <property type="project" value="TreeGrafter"/>
</dbReference>
<dbReference type="GO" id="GO:0050660">
    <property type="term" value="F:flavin adenine dinucleotide binding"/>
    <property type="evidence" value="ECO:0007669"/>
    <property type="project" value="UniProtKB-UniRule"/>
</dbReference>
<dbReference type="GO" id="GO:0030488">
    <property type="term" value="P:tRNA methylation"/>
    <property type="evidence" value="ECO:0007669"/>
    <property type="project" value="TreeGrafter"/>
</dbReference>
<dbReference type="GO" id="GO:0002098">
    <property type="term" value="P:tRNA wobble uridine modification"/>
    <property type="evidence" value="ECO:0007669"/>
    <property type="project" value="InterPro"/>
</dbReference>
<dbReference type="FunFam" id="1.10.10.1800:FF:000001">
    <property type="entry name" value="tRNA uridine 5-carboxymethylaminomethyl modification enzyme MnmG"/>
    <property type="match status" value="1"/>
</dbReference>
<dbReference type="FunFam" id="1.10.150.570:FF:000001">
    <property type="entry name" value="tRNA uridine 5-carboxymethylaminomethyl modification enzyme MnmG"/>
    <property type="match status" value="1"/>
</dbReference>
<dbReference type="FunFam" id="3.50.50.60:FF:000002">
    <property type="entry name" value="tRNA uridine 5-carboxymethylaminomethyl modification enzyme MnmG"/>
    <property type="match status" value="1"/>
</dbReference>
<dbReference type="FunFam" id="3.50.50.60:FF:000063">
    <property type="entry name" value="tRNA uridine 5-carboxymethylaminomethyl modification enzyme MnmG"/>
    <property type="match status" value="1"/>
</dbReference>
<dbReference type="Gene3D" id="3.50.50.60">
    <property type="entry name" value="FAD/NAD(P)-binding domain"/>
    <property type="match status" value="2"/>
</dbReference>
<dbReference type="Gene3D" id="1.10.150.570">
    <property type="entry name" value="GidA associated domain, C-terminal subdomain"/>
    <property type="match status" value="1"/>
</dbReference>
<dbReference type="Gene3D" id="1.10.10.1800">
    <property type="entry name" value="tRNA uridine 5-carboxymethylaminomethyl modification enzyme MnmG/GidA"/>
    <property type="match status" value="1"/>
</dbReference>
<dbReference type="HAMAP" id="MF_00129">
    <property type="entry name" value="MnmG_GidA"/>
    <property type="match status" value="1"/>
</dbReference>
<dbReference type="InterPro" id="IPR036188">
    <property type="entry name" value="FAD/NAD-bd_sf"/>
</dbReference>
<dbReference type="InterPro" id="IPR049312">
    <property type="entry name" value="GIDA_C_N"/>
</dbReference>
<dbReference type="InterPro" id="IPR004416">
    <property type="entry name" value="MnmG"/>
</dbReference>
<dbReference type="InterPro" id="IPR002218">
    <property type="entry name" value="MnmG-rel"/>
</dbReference>
<dbReference type="InterPro" id="IPR020595">
    <property type="entry name" value="MnmG-rel_CS"/>
</dbReference>
<dbReference type="InterPro" id="IPR026904">
    <property type="entry name" value="MnmG_C"/>
</dbReference>
<dbReference type="InterPro" id="IPR047001">
    <property type="entry name" value="MnmG_C_subdom"/>
</dbReference>
<dbReference type="InterPro" id="IPR044920">
    <property type="entry name" value="MnmG_C_subdom_sf"/>
</dbReference>
<dbReference type="InterPro" id="IPR040131">
    <property type="entry name" value="MnmG_N"/>
</dbReference>
<dbReference type="NCBIfam" id="TIGR00136">
    <property type="entry name" value="mnmG_gidA"/>
    <property type="match status" value="1"/>
</dbReference>
<dbReference type="PANTHER" id="PTHR11806">
    <property type="entry name" value="GLUCOSE INHIBITED DIVISION PROTEIN A"/>
    <property type="match status" value="1"/>
</dbReference>
<dbReference type="PANTHER" id="PTHR11806:SF0">
    <property type="entry name" value="PROTEIN MTO1 HOMOLOG, MITOCHONDRIAL"/>
    <property type="match status" value="1"/>
</dbReference>
<dbReference type="Pfam" id="PF01134">
    <property type="entry name" value="GIDA"/>
    <property type="match status" value="1"/>
</dbReference>
<dbReference type="Pfam" id="PF21680">
    <property type="entry name" value="GIDA_C_1st"/>
    <property type="match status" value="1"/>
</dbReference>
<dbReference type="Pfam" id="PF13932">
    <property type="entry name" value="SAM_GIDA_C"/>
    <property type="match status" value="1"/>
</dbReference>
<dbReference type="PRINTS" id="PR00368">
    <property type="entry name" value="FADPNR"/>
</dbReference>
<dbReference type="PRINTS" id="PR00411">
    <property type="entry name" value="PNDRDTASEI"/>
</dbReference>
<dbReference type="SMART" id="SM01228">
    <property type="entry name" value="GIDA_assoc_3"/>
    <property type="match status" value="1"/>
</dbReference>
<dbReference type="SUPFAM" id="SSF51905">
    <property type="entry name" value="FAD/NAD(P)-binding domain"/>
    <property type="match status" value="1"/>
</dbReference>
<dbReference type="PROSITE" id="PS01280">
    <property type="entry name" value="GIDA_1"/>
    <property type="match status" value="1"/>
</dbReference>
<dbReference type="PROSITE" id="PS01281">
    <property type="entry name" value="GIDA_2"/>
    <property type="match status" value="1"/>
</dbReference>
<comment type="function">
    <text evidence="1">NAD-binding protein involved in the addition of a carboxymethylaminomethyl (cmnm) group at the wobble position (U34) of certain tRNAs, forming tRNA-cmnm(5)s(2)U34.</text>
</comment>
<comment type="cofactor">
    <cofactor evidence="1">
        <name>FAD</name>
        <dbReference type="ChEBI" id="CHEBI:57692"/>
    </cofactor>
</comment>
<comment type="subunit">
    <text evidence="1">Homodimer. Heterotetramer of two MnmE and two MnmG subunits.</text>
</comment>
<comment type="subcellular location">
    <subcellularLocation>
        <location evidence="1">Cytoplasm</location>
    </subcellularLocation>
</comment>
<comment type="similarity">
    <text evidence="1">Belongs to the MnmG family.</text>
</comment>
<comment type="sequence caution" evidence="2">
    <conflict type="frameshift">
        <sequence resource="EMBL-CDS" id="AAC45494"/>
    </conflict>
</comment>
<sequence>MNFQENYDVIVIGGGHAGVEASLAAARMGSKTLLMTINLNMVAFMPCNPSIGGSAKGIVVREIDALGGEMGRNIDKTYIQMKMLNTGKGPAVRALRAQADKDEYAASMKNTVSDQENLTLRQGMVEELILDDEKQKVIGVRTSTGTQYGAKAVIITTGTALRGEIIIGELKYSSGPNNSLSSIGLADNLREIGFEIGRFKTGTPPRVLASSIDYDKTEIQPGDEAPNHFSFMSSDEDYLKDQIPCWLTYTTENSHTILRDNLHRAPLFSGIVKGVGPRYCPSIEDKITRFADKPRHQLFLEPEGRNTEEVYIGGLSTSMPEDVQFDLVKSIPGLENAKMMRPGYAIEYDVVMPHQLRPTLETKLISGLFTAGQTNGTSGYEEAAGQGLVAGINAALKIQGKPEFILKRSEAYIGVMIDDLVTKGTLEPYRLLTSRAEYRLILRHDNADRRLTEIGRQVGLVSDAQWEHYQAKMAQFDREMKRLNSEKLKPLPDTQEKLGKLGFGPIKDALTGAEFLKRPEVNYDEVIDFIGQAPEVIDRTVIELIETEITYEGYIKKAMDQVDKMHRLEAKRIPKNMDWDKLDSIATEARQKFKKINPETLGQASRISGVNPADISILMVYLEGK</sequence>
<feature type="chain" id="PRO_0000117118" description="tRNA uridine 5-carboxymethylaminomethyl modification enzyme MnmG">
    <location>
        <begin position="1"/>
        <end position="625"/>
    </location>
</feature>
<feature type="binding site" evidence="1">
    <location>
        <begin position="13"/>
        <end position="18"/>
    </location>
    <ligand>
        <name>FAD</name>
        <dbReference type="ChEBI" id="CHEBI:57692"/>
    </ligand>
</feature>
<feature type="binding site" evidence="1">
    <location>
        <position position="125"/>
    </location>
    <ligand>
        <name>FAD</name>
        <dbReference type="ChEBI" id="CHEBI:57692"/>
    </ligand>
</feature>
<feature type="binding site" evidence="1">
    <location>
        <position position="182"/>
    </location>
    <ligand>
        <name>FAD</name>
        <dbReference type="ChEBI" id="CHEBI:57692"/>
    </ligand>
</feature>
<feature type="binding site" evidence="1">
    <location>
        <begin position="276"/>
        <end position="290"/>
    </location>
    <ligand>
        <name>NAD(+)</name>
        <dbReference type="ChEBI" id="CHEBI:57540"/>
    </ligand>
</feature>
<feature type="binding site" evidence="1">
    <location>
        <position position="373"/>
    </location>
    <ligand>
        <name>FAD</name>
        <dbReference type="ChEBI" id="CHEBI:57692"/>
    </ligand>
</feature>
<feature type="sequence conflict" description="In Ref. 2; AAC45494." evidence="2" ref="2">
    <original>I</original>
    <variation>S</variation>
    <location>
        <position position="542"/>
    </location>
</feature>
<name>MNMG_LACLM</name>
<protein>
    <recommendedName>
        <fullName evidence="1">tRNA uridine 5-carboxymethylaminomethyl modification enzyme MnmG</fullName>
    </recommendedName>
    <alternativeName>
        <fullName evidence="1">Glucose-inhibited division protein A</fullName>
    </alternativeName>
</protein>
<organism>
    <name type="scientific">Lactococcus lactis subsp. cremoris (strain MG1363)</name>
    <dbReference type="NCBI Taxonomy" id="416870"/>
    <lineage>
        <taxon>Bacteria</taxon>
        <taxon>Bacillati</taxon>
        <taxon>Bacillota</taxon>
        <taxon>Bacilli</taxon>
        <taxon>Lactobacillales</taxon>
        <taxon>Streptococcaceae</taxon>
        <taxon>Lactococcus</taxon>
        <taxon>Lactococcus cremoris subsp. cremoris</taxon>
    </lineage>
</organism>
<gene>
    <name evidence="1" type="primary">mnmG</name>
    <name evidence="1" type="synonym">gidA</name>
    <name type="ordered locus">llmg_2035</name>
</gene>
<proteinExistence type="inferred from homology"/>